<organism>
    <name type="scientific">Trieres chinensis</name>
    <name type="common">Marine centric diatom</name>
    <name type="synonym">Odontella sinensis</name>
    <dbReference type="NCBI Taxonomy" id="1514140"/>
    <lineage>
        <taxon>Eukaryota</taxon>
        <taxon>Sar</taxon>
        <taxon>Stramenopiles</taxon>
        <taxon>Ochrophyta</taxon>
        <taxon>Bacillariophyta</taxon>
        <taxon>Mediophyceae</taxon>
        <taxon>Biddulphiophycidae</taxon>
        <taxon>Eupodiscales</taxon>
        <taxon>Parodontellaceae</taxon>
        <taxon>Trieres</taxon>
    </lineage>
</organism>
<dbReference type="EMBL" id="Z67753">
    <property type="protein sequence ID" value="CAA91731.1"/>
    <property type="molecule type" value="Genomic_DNA"/>
</dbReference>
<dbReference type="PIR" id="S78358">
    <property type="entry name" value="S78358"/>
</dbReference>
<dbReference type="GO" id="GO:0009507">
    <property type="term" value="C:chloroplast"/>
    <property type="evidence" value="ECO:0007669"/>
    <property type="project" value="UniProtKB-SubCell"/>
</dbReference>
<dbReference type="InterPro" id="IPR010004">
    <property type="entry name" value="Uncharacterised_Ycf66"/>
</dbReference>
<dbReference type="Pfam" id="PF07444">
    <property type="entry name" value="Ycf66_N"/>
    <property type="match status" value="1"/>
</dbReference>
<gene>
    <name type="primary">ycf66</name>
</gene>
<keyword id="KW-0150">Chloroplast</keyword>
<keyword id="KW-0934">Plastid</keyword>
<comment type="subcellular location">
    <subcellularLocation>
        <location>Plastid</location>
        <location>Chloroplast</location>
    </subcellularLocation>
</comment>
<comment type="similarity">
    <text evidence="1">Belongs to the ycf66 family.</text>
</comment>
<protein>
    <recommendedName>
        <fullName>Uncharacterized protein ycf66</fullName>
    </recommendedName>
    <alternativeName>
        <fullName>ORF99</fullName>
    </alternativeName>
</protein>
<evidence type="ECO:0000305" key="1"/>
<feature type="chain" id="PRO_0000217393" description="Uncharacterized protein ycf66">
    <location>
        <begin position="1"/>
        <end position="99"/>
    </location>
</feature>
<accession>P49837</accession>
<reference key="1">
    <citation type="journal article" date="1995" name="Plant Mol. Biol. Rep.">
        <title>The chloroplast genome of a chlorophyll a+c-containing alga, Odontella sinensis.</title>
        <authorList>
            <person name="Kowallik K.V."/>
            <person name="Stoebe B."/>
            <person name="Schaffran I."/>
            <person name="Kroth-Pancic P."/>
            <person name="Freier U."/>
        </authorList>
    </citation>
    <scope>NUCLEOTIDE SEQUENCE [LARGE SCALE GENOMIC DNA]</scope>
</reference>
<sequence length="99" mass="11278">MINFSFGPNIFLGFILGFGILLLYLLRFVKPEVARDEDLFFVTLGLLYSSILVVHGWRLDPILLFSQVLIIASVLGAGWENIRLRGLLVNLTKKKKEKK</sequence>
<geneLocation type="chloroplast"/>
<name>YCF66_TRICV</name>
<proteinExistence type="inferred from homology"/>